<feature type="signal peptide" evidence="2">
    <location>
        <begin position="1"/>
        <end position="21"/>
    </location>
</feature>
<feature type="chain" id="PRO_0000433564" description="Adhesion G protein-coupled receptor F5">
    <location>
        <begin position="22"/>
        <end position="1348"/>
    </location>
</feature>
<feature type="topological domain" description="Extracellular" evidence="22">
    <location>
        <begin position="22"/>
        <end position="1019"/>
    </location>
</feature>
<feature type="transmembrane region" description="Helical" evidence="2">
    <location>
        <begin position="1020"/>
        <end position="1040"/>
    </location>
</feature>
<feature type="topological domain" description="Cytoplasmic" evidence="22">
    <location>
        <begin position="1041"/>
        <end position="1055"/>
    </location>
</feature>
<feature type="transmembrane region" description="Helical" evidence="2">
    <location>
        <begin position="1056"/>
        <end position="1076"/>
    </location>
</feature>
<feature type="topological domain" description="Extracellular" evidence="22">
    <location>
        <begin position="1077"/>
        <end position="1092"/>
    </location>
</feature>
<feature type="transmembrane region" description="Helical" evidence="2">
    <location>
        <begin position="1093"/>
        <end position="1113"/>
    </location>
</feature>
<feature type="topological domain" description="Cytoplasmic" evidence="22">
    <location>
        <begin position="1114"/>
        <end position="1130"/>
    </location>
</feature>
<feature type="transmembrane region" description="Helical" evidence="2">
    <location>
        <begin position="1131"/>
        <end position="1151"/>
    </location>
</feature>
<feature type="topological domain" description="Extracellular" evidence="22">
    <location>
        <begin position="1152"/>
        <end position="1175"/>
    </location>
</feature>
<feature type="transmembrane region" description="Helical" evidence="2">
    <location>
        <begin position="1176"/>
        <end position="1196"/>
    </location>
</feature>
<feature type="topological domain" description="Cytoplasmic" evidence="22">
    <location>
        <begin position="1197"/>
        <end position="1221"/>
    </location>
</feature>
<feature type="transmembrane region" description="Helical" evidence="2">
    <location>
        <begin position="1222"/>
        <end position="1242"/>
    </location>
</feature>
<feature type="topological domain" description="Extracellular" evidence="22">
    <location>
        <begin position="1243"/>
        <end position="1250"/>
    </location>
</feature>
<feature type="transmembrane region" description="Helical" evidence="2">
    <location>
        <begin position="1251"/>
        <end position="1271"/>
    </location>
</feature>
<feature type="topological domain" description="Cytoplasmic" evidence="22">
    <location>
        <begin position="1272"/>
        <end position="1348"/>
    </location>
</feature>
<feature type="domain" description="SEA" evidence="5">
    <location>
        <begin position="163"/>
        <end position="271"/>
    </location>
</feature>
<feature type="domain" description="Ig-like 1" evidence="4">
    <location>
        <begin position="268"/>
        <end position="366"/>
    </location>
</feature>
<feature type="domain" description="Ig-like 2" evidence="4">
    <location>
        <begin position="367"/>
        <end position="464"/>
    </location>
</feature>
<feature type="domain" description="Ig-like 3" evidence="4">
    <location>
        <begin position="469"/>
        <end position="559"/>
    </location>
</feature>
<feature type="domain" description="GAIN-B" evidence="3">
    <location>
        <begin position="841"/>
        <end position="1005"/>
    </location>
</feature>
<feature type="region of interest" description="GPS" evidence="3">
    <location>
        <begin position="953"/>
        <end position="1005"/>
    </location>
</feature>
<feature type="region of interest" description="Tethered agonist" evidence="13 14 17">
    <location>
        <begin position="993"/>
        <end position="1008"/>
    </location>
</feature>
<feature type="region of interest" description="Disordered" evidence="6">
    <location>
        <begin position="1328"/>
        <end position="1348"/>
    </location>
</feature>
<feature type="site" description="Cleavage; by furin" evidence="1">
    <location>
        <begin position="51"/>
        <end position="52"/>
    </location>
</feature>
<feature type="site" description="Cleavage" evidence="1">
    <location>
        <begin position="223"/>
        <end position="224"/>
    </location>
</feature>
<feature type="site" description="Cleavage; by autolysis" evidence="3 23">
    <location>
        <begin position="992"/>
        <end position="993"/>
    </location>
</feature>
<feature type="modified residue" description="Phosphoserine" evidence="1">
    <location>
        <position position="818"/>
    </location>
</feature>
<feature type="modified residue" description="Phosphothreonine" evidence="24">
    <location>
        <position position="1302"/>
    </location>
</feature>
<feature type="modified residue" description="Phosphoserine" evidence="24">
    <location>
        <position position="1309"/>
    </location>
</feature>
<feature type="glycosylation site" description="N-linked (GlcNAc...) asparagine" evidence="2">
    <location>
        <position position="270"/>
    </location>
</feature>
<feature type="glycosylation site" description="N-linked (GlcNAc...) asparagine" evidence="2">
    <location>
        <position position="286"/>
    </location>
</feature>
<feature type="glycosylation site" description="N-linked (GlcNAc...) asparagine" evidence="2">
    <location>
        <position position="337"/>
    </location>
</feature>
<feature type="glycosylation site" description="N-linked (GlcNAc...) asparagine" evidence="2">
    <location>
        <position position="349"/>
    </location>
</feature>
<feature type="glycosylation site" description="N-linked (GlcNAc...) asparagine" evidence="2">
    <location>
        <position position="470"/>
    </location>
</feature>
<feature type="glycosylation site" description="N-linked (GlcNAc...) asparagine" evidence="2">
    <location>
        <position position="538"/>
    </location>
</feature>
<feature type="glycosylation site" description="N-linked (GlcNAc...) asparagine" evidence="2">
    <location>
        <position position="665"/>
    </location>
</feature>
<feature type="disulfide bond" evidence="4">
    <location>
        <begin position="291"/>
        <end position="348"/>
    </location>
</feature>
<feature type="disulfide bond" evidence="4">
    <location>
        <begin position="389"/>
        <end position="447"/>
    </location>
</feature>
<feature type="disulfide bond" evidence="4">
    <location>
        <begin position="490"/>
        <end position="543"/>
    </location>
</feature>
<feature type="disulfide bond" evidence="3">
    <location>
        <begin position="953"/>
        <end position="987"/>
    </location>
</feature>
<feature type="disulfide bond" evidence="3">
    <location>
        <begin position="972"/>
        <end position="989"/>
    </location>
</feature>
<feature type="mutagenesis site" description="Loss of autocatalytic cleavage; exhibits higher levels of saturated phosphatidylcholine in the bronchoalveolar lavage fluid, when tested in 8 week-old transgenic mice, a phenotype similar to that of knockout animals, suggesting loss of function in vivo; does not affect localization at the plasma membrane; does not affect the response to exogenously added agonistic peptide." evidence="17">
    <original>H</original>
    <variation>A</variation>
    <location>
        <position position="991"/>
    </location>
</feature>
<feature type="mutagenesis site" description="Loss of activation, as measured by inositol phosphate conversion." evidence="14">
    <original>TSF</original>
    <variation>AAA</variation>
    <location>
        <begin position="993"/>
        <end position="995"/>
    </location>
</feature>
<feature type="mutagenesis site" description="No effect on protein expression; no effect on location at the plasma membrane; no effect on inositol monophosphate conversion; no effect on the response to exogenously added agonistic peptide." evidence="17">
    <original>T</original>
    <variation>A</variation>
    <location>
        <position position="993"/>
    </location>
</feature>
<feature type="mutagenesis site" description="No effect on protein expression; no effect on location at the plasma membrane; no effect on inositol monophosphate conversion; no effect on the response to exogenously added agonistic peptide." evidence="17">
    <original>S</original>
    <variation>A</variation>
    <location>
        <position position="994"/>
    </location>
</feature>
<feature type="mutagenesis site" description="Complete inhibition of basal inositol monophosphate formation, when tested in transfected HEK293 cells; no effect on protein expression; no effect on location at the plasma membrane; no effect on the response to exogenously added agonistic peptide." evidence="17">
    <original>F</original>
    <variation>A</variation>
    <location>
        <position position="995"/>
    </location>
</feature>
<feature type="mutagenesis site" description="Loss of activation, as measured by inositol phosphate conversion." evidence="14">
    <original>SIL</original>
    <variation>AAA</variation>
    <location>
        <begin position="996"/>
        <end position="998"/>
    </location>
</feature>
<feature type="mutagenesis site" description="No effect on protein expression; no effect on location at the plasma membrane; no effect on inositol monophosphate conversion; no effect on the response to exogenously added agonistic peptide." evidence="17">
    <original>S</original>
    <variation>A</variation>
    <location>
        <position position="996"/>
    </location>
</feature>
<feature type="mutagenesis site" description="Decreased basal inositol monophosphate formation, when tested in transfected HEK293 cells; no effect on protein expression; no effect on location at the plasma membrane; no effect on the response to exogenously added agonistic peptide." evidence="17">
    <original>I</original>
    <variation>A</variation>
    <location>
        <position position="997"/>
    </location>
</feature>
<feature type="mutagenesis site" description="Complete inhibition of basal inositol monophosphate formation, when tested in transfected HEK293 cells; no effect on protein expression; no effect on location at the plasma membrane; no effect on the response to exogenously added agonistic peptide." evidence="17">
    <original>L</original>
    <variation>A</variation>
    <location>
        <position position="998"/>
    </location>
</feature>
<feature type="mutagenesis site" description="Loss of activation, as measured by inositol phosphate conversion." evidence="14">
    <original>MSP</original>
    <variation>AAA</variation>
    <location>
        <begin position="999"/>
        <end position="1001"/>
    </location>
</feature>
<feature type="mutagenesis site" description="Complete inhibition of basal inositol monophosphate formation, when tested in transfected HEK293 cells; no effect on protein expression; no effect on location at the plasma membrane; no effect on the response to exogenously added agonistic peptide." evidence="17">
    <original>M</original>
    <variation>A</variation>
    <location>
        <position position="999"/>
    </location>
</feature>
<feature type="mutagenesis site" description="No effect on protein expression; no effect on location at the plasma membrane; no effect on inositol monophosphate conversion; no effect on the response to exogenously added agonistic peptide." evidence="17">
    <original>S</original>
    <variation>A</variation>
    <location>
        <position position="1000"/>
    </location>
</feature>
<feature type="mutagenesis site" description="No effect on protein expression; no effect on location at the plasma membrane; no effect on inositol monophosphate conversion; no effect on the response to exogenously added agonistic peptide." evidence="17">
    <original>P</original>
    <variation>A</variation>
    <location>
        <position position="1001"/>
    </location>
</feature>
<feature type="mutagenesis site" description="Loss of activation, as measured by inositol phosphate conversion." evidence="14">
    <original>DSP</original>
    <variation>AAA</variation>
    <location>
        <begin position="1002"/>
        <end position="1004"/>
    </location>
</feature>
<feature type="mutagenesis site" description="Decreased basal inositol monophosphate formation, when tested in transfected HEK293 cells; no effect on protein expression; no effect on location at the plasma membrane; Decreased inositol monophosphate formation, when tested in transfected HEK293 cells; no effect on the response to exogenously added agonistic peptide." evidence="17">
    <original>D</original>
    <variation>A</variation>
    <location>
        <position position="1002"/>
    </location>
</feature>
<feature type="mutagenesis site" description="Decreased basal inositol monophosphate formation, when tested in transfected HEK293 cells; no effect on protein expression; no effect on location at the plasma membrane; no effect on the response to exogenously added agonistic peptide." evidence="17">
    <original>S</original>
    <variation>A</variation>
    <location>
        <position position="1003"/>
    </location>
</feature>
<feature type="mutagenesis site" description="Decreased basal inositol monophosphate formation, when tested in transfected HEK293 cells; no effect on protein expression; no effect on location at the plasma membrane; no effect on the response to exogenously added agonistic peptide." evidence="17">
    <original>P</original>
    <variation>A</variation>
    <location>
        <position position="1004"/>
    </location>
</feature>
<feature type="mutagenesis site" description="No effect on activation, as measured by inositol phosphate conversion." evidence="14">
    <original>DPG</original>
    <variation>AAA</variation>
    <location>
        <begin position="1005"/>
        <end position="1007"/>
    </location>
</feature>
<feature type="mutagenesis site" description="Unresponsive to exogenous ligand-mediated activation; no effect on location at the plasma membrane." evidence="17">
    <original>Y</original>
    <variation>A</variation>
    <location>
        <position position="1158"/>
    </location>
</feature>
<feature type="mutagenesis site" description="Exogenous ligand-mediated activation similar to wild-type, albeit with lower potency; no effect on location at the plasma membrane." evidence="17">
    <original>Y</original>
    <variation>F</variation>
    <location>
        <position position="1158"/>
    </location>
</feature>
<feature type="mutagenesis site" description="Unresponsive to exogenous ligand-mediated activation." evidence="17">
    <original>R</original>
    <variation>A</variation>
    <variation>K</variation>
    <location>
        <position position="1160"/>
    </location>
</feature>
<feature type="mutagenesis site" description="Loss of, or strong reduction, in exogenous ligand-mediated activation." evidence="17">
    <original>W</original>
    <variation>A</variation>
    <variation>F</variation>
    <variation>V</variation>
    <variation>Y</variation>
    <location>
        <position position="1165"/>
    </location>
</feature>
<feature type="mutagenesis site" description="Unresponsive to exogenous ligand-mediated activation; no effect on location at the plasma membrane." evidence="17">
    <original>L</original>
    <variation>A</variation>
    <variation>I</variation>
    <location>
        <position position="1166"/>
    </location>
</feature>
<feature type="mutagenesis site" description="Unresponsive to exogenous ligand-mediated activation; no effect on location at the plasma membrane." evidence="17">
    <original>T</original>
    <variation>A</variation>
    <location>
        <position position="1240"/>
    </location>
</feature>
<feature type="mutagenesis site" description="Exogenous ligand-mediated activation maintained, although with decreased efficacy compared to wild-type." evidence="17">
    <original>T</original>
    <variation>S</variation>
    <location>
        <position position="1240"/>
    </location>
</feature>
<proteinExistence type="evidence at protein level"/>
<sequence>MRSPRTFTFYFLLLVICSSEAALSTPTEPIVQPSILQEHELAGEELLRPKRAAAAGDRVAEEYMVDIEISFENVSFLESIRAHLNNLSFPIRGTEADILNIAMTTVCTPAGNDLLCFCEKGYQWSEERCLHSLTCQDYDSALPGGYCSCLKGLPPQGPFCQLPEAFITLKLKVRLNIGFQEDLKNTSSALYRSYKTDLERAFRAGYRTLPGFRSVTVTQFTKGSVVVNYVVRVTSAPLPGSIHKANEQVIQNLNHTYKMDYNSFQGTPSNETKFTVIPEFIFEGDNVTLECETEFVTSNTSWYYGEKRSDIQNSDKYSIHTTVINNISLITRLTIYNFTQHDAGMYGCNVTLDIFEYGTVRKLDVTPIRILAKEERKVVCDNHPISLNCCSENIANWSSIEWKQEGKISILGNPESDLESSCSTYTLKADGTQCPSGSSGTTVIYTCEFVSAYGARGSKNIAVTFTSVANLTITRDPISVSEGQSFSITCLSDVSSFDEVYWNTSAGIKIHPRFYTMRRYQDGAESVLMVKTSTREWNGTYHCIFRYKNSYSIATKDVTVHPLPLVSDIMMDPLEASGLCTSSHQFKCCVEEDAGEEYAVTFHVDSSSFPAEREVIGKQACYTYSLPANLPRCPKDIAVFCHFTNAANSSVRSPSMKLKLIPRENVTCQDPIIGIGDPGKVIQKLCQFSGVYGSPGQAIGGTVTYKCVGTQWKEESRACISAPINGLLQVAKALIKSPTQDQKLPTYLRDLSVSAGKEEQDIRSSPGSLGAIISILDLLSTVPTQVNSEMMRDILATINVILDKSALNSWEKLLQQQSNQSSQFLHSVERFSQALQLGDSTPPFLAHPNVQMKSMVIKRGHPQIYQQQFIFKDSDLWGDVAIDECQLGNLQPDSSIVTVAFPTLKAILAQDVQRKTSSNSLVMTTTVSHNIVKPFRISMTFKNNHRSGGKPQCVFWNFSLANNTGGWDSSGCSVEDDGRDNRDRVFCKCNHLTSFSILMSPDSPDPGSLLKILLDIISYIGLGFSIVSLAACLVVEAMVWKSVTKNRTSYMRHICIVNIAFCLLIADIWFIVAGAIHDGRYPLNETACVAATFFIHFFYLSVFFWMLTLGLMLFYRLIFILHDASKSTQKAIAFSLGYGCPLIISSITVGVTQPQEVYMRKNACWLNWEDTRALLAFAIPALIIVVVNVSITVVVITKILRPSIGDKPGKQEKSSLFQISKSIGVLTPLLGLTWGFGLATVIQGSNAVFHIIFTLLNAFQGLFILLFGCLWDQKVQEALLHKFSLSRWSSQHSKSTSIGSSTPVFSMSSPISRRFNNLFGKTGTYNVSTPETTSSSLENSSSAYSLLN</sequence>
<comment type="function">
    <text evidence="8 9 10 11 14 15 16">Adhesion G protein-coupled receptor (PubMed:23590306, PubMed:23684610, PubMed:23922714, PubMed:28570277). In alveolar type II (ATII or AT2) cells, required for normal lung surfactant homeostasis (PubMed:23590306, PubMed:23684610, PubMed:23922714, PubMed:28570277). Modulation of both surfactant secretion and uptake by ATII cells is mediated by the downstream activation of GNAQ/GNA11 proteins and may be a consequence of increased cortical F-actin assembly induced by ADGRF5 activation (PubMed:28570277). In the kidney, may play a role in the regulation of acid excretion into the primary urine, possibly by regulating the surface expression of V-ATPase proton pump (PubMed:33004624). As a receptor for soluble FNDC4 (sFNDC4), required for proper systemic glucose tolerance, specifically sensitizing white adipose tissue to insulin. Also plays a role in sFNDC4-induced decrease of local inflammation in white adipose tissue (PubMed:22971422, PubMed:34016966).</text>
</comment>
<comment type="activity regulation">
    <text evidence="22">As an adhesion G protein-coupled receptor (aGPCR) exhibits a large N-terminal extracellular domain containing highly conserved GPCR autoproteolysis-inducing (GAIN) domain. During synthesis, intracellular autoproteolytic processing of nascent chain within the GAIN domain generates a mature protein, consisting of an N-terminal fragment that is non-covalently linked to the C-terminal fragment. The mature protein is routed to the plasma membrane where the N- and C-terminal fragments remain associated, forming the holoreceptor. Dissociation of the aGPCR fragments stimulates G protein signaling through the action of the tethered-peptide agonist stalk that is occluded within the GAIN domain in the holoreceptor form. This dissociation might be induced by ligand binding, such as that of sFNDC4.</text>
</comment>
<comment type="subunit">
    <text evidence="1 11">Homodimer; disulfide-linked. Heterodimer of 2 chains generated by proteolytic processing; the large extracellular N-terminal fragment and the membrane-bound C-terminal fragment predominantly remain associated and non-covalently linked. Fragment generates by the processing enzyme furin remains attached to the extracellular N-terminal fragment. Interacts (via N-terminal extracellular domain) with SFTPD (PubMed:23922714).</text>
</comment>
<comment type="subcellular location">
    <subcellularLocation>
        <location evidence="17">Cell membrane</location>
        <topology evidence="2">Multi-pass membrane protein</topology>
    </subcellularLocation>
</comment>
<comment type="tissue specificity">
    <text evidence="7 8 9 10 11 12 13 15 16 18">Widely expressed, with highest levels in lung, pancreas, kidney and heart (PubMed:22837050, PubMed:23590306, PubMed:28154189, PubMed:33004624). In the kidney, expressed more abundantly in the medulla than in the cortex, predominantly expressed in A-intercalated cells (at protein level) (PubMed:23922714, PubMed:33004624). Expressed in endothelial cells from various tissues, including brain, heart, kidney, liver, lung and muscle (PubMed:23684610, PubMed:23922714, PubMed:26394398, PubMed:33004624). In the lung, expressed in alveolar type II (ATII) cells (at protein level) (PubMed:23684610, PubMed:23922714). Expressed in pancreatic islets of Langerhans, predominantly in delta cells, as well as in endothelial cells (PubMed:38228886). Expressed in white adipose tissue (PubMed:22971422, PubMed:34016966).</text>
</comment>
<comment type="developmental stage">
    <text evidence="9">In the developing lung, expression starts increasing at 15.5 dpc, reaching peak expression at postnatal day 1. High expression levels are maintained throughout adulthood.</text>
</comment>
<comment type="PTM">
    <text evidence="1">Highly glycosylated.</text>
</comment>
<comment type="PTM">
    <text evidence="1">Proteolytically cleaved at multiple sites: one in the GPS region of the GAIN-B domain (S1 site) and the other in the SEA domain (S2 site). The proteolytic cleavage at S1 site generates an extracellular subunit and a seven-transmembrane subunit. The proteolytic cleavage at S2 site generates a fragment that undergoes proteolytic cleavage by the processing enzyme furin.</text>
</comment>
<comment type="disruption phenotype">
    <text evidence="10 11 12">Knockout mice are born at the expected Mendelian rate. They are viable and fertile, but display labored breathing by 4 months of age, weigh up to 25% less than wild-type littermates by 14 months and have a shortened lifespan. They exhibit abnormal bronchoalveolar lavage fluid, reminiscent of pulmonary alveolar proteinosis (PubMed:23684610, PubMed:23922714, PubMed:26394398). This alteration of surfactant quality temporally precedes a massive accumulation of foamy macrophages, leading to severe pulmonary emphysema in aged animals (PubMed:23922714, PubMed:26394398). In addition, knockout mice show impairment of the blood-brain barrier (PubMed:26394398).</text>
</comment>
<comment type="similarity">
    <text evidence="22">Belongs to the G-protein coupled receptor 2 family. Adhesion G-protein coupled receptor (ADGR) subfamily.</text>
</comment>
<evidence type="ECO:0000250" key="1">
    <source>
        <dbReference type="UniProtKB" id="Q9WVT0"/>
    </source>
</evidence>
<evidence type="ECO:0000255" key="2"/>
<evidence type="ECO:0000255" key="3">
    <source>
        <dbReference type="PROSITE-ProRule" id="PRU00098"/>
    </source>
</evidence>
<evidence type="ECO:0000255" key="4">
    <source>
        <dbReference type="PROSITE-ProRule" id="PRU00114"/>
    </source>
</evidence>
<evidence type="ECO:0000255" key="5">
    <source>
        <dbReference type="PROSITE-ProRule" id="PRU00188"/>
    </source>
</evidence>
<evidence type="ECO:0000256" key="6">
    <source>
        <dbReference type="SAM" id="MobiDB-lite"/>
    </source>
</evidence>
<evidence type="ECO:0000269" key="7">
    <source>
    </source>
</evidence>
<evidence type="ECO:0000269" key="8">
    <source>
    </source>
</evidence>
<evidence type="ECO:0000269" key="9">
    <source>
    </source>
</evidence>
<evidence type="ECO:0000269" key="10">
    <source>
    </source>
</evidence>
<evidence type="ECO:0000269" key="11">
    <source>
    </source>
</evidence>
<evidence type="ECO:0000269" key="12">
    <source>
    </source>
</evidence>
<evidence type="ECO:0000269" key="13">
    <source>
    </source>
</evidence>
<evidence type="ECO:0000269" key="14">
    <source>
    </source>
</evidence>
<evidence type="ECO:0000269" key="15">
    <source>
    </source>
</evidence>
<evidence type="ECO:0000269" key="16">
    <source>
    </source>
</evidence>
<evidence type="ECO:0000269" key="17">
    <source>
    </source>
</evidence>
<evidence type="ECO:0000269" key="18">
    <source>
    </source>
</evidence>
<evidence type="ECO:0000303" key="19">
    <source>
    </source>
</evidence>
<evidence type="ECO:0000303" key="20">
    <source>
    </source>
</evidence>
<evidence type="ECO:0000303" key="21">
    <source>
    </source>
</evidence>
<evidence type="ECO:0000305" key="22"/>
<evidence type="ECO:0000305" key="23">
    <source>
    </source>
</evidence>
<evidence type="ECO:0007744" key="24">
    <source>
    </source>
</evidence>
<keyword id="KW-0068">Autocatalytic cleavage</keyword>
<keyword id="KW-1003">Cell membrane</keyword>
<keyword id="KW-1015">Disulfide bond</keyword>
<keyword id="KW-0325">Glycoprotein</keyword>
<keyword id="KW-0393">Immunoglobulin domain</keyword>
<keyword id="KW-0472">Membrane</keyword>
<keyword id="KW-0597">Phosphoprotein</keyword>
<keyword id="KW-1185">Reference proteome</keyword>
<keyword id="KW-0677">Repeat</keyword>
<keyword id="KW-0732">Signal</keyword>
<keyword id="KW-0812">Transmembrane</keyword>
<keyword id="KW-1133">Transmembrane helix</keyword>
<protein>
    <recommendedName>
        <fullName>Adhesion G protein-coupled receptor F5</fullName>
    </recommendedName>
    <alternativeName>
        <fullName>G-protein coupled hepta-helical receptor Ig-hepta</fullName>
        <shortName evidence="20">Ig-Hepta</shortName>
    </alternativeName>
    <alternativeName>
        <fullName>G-protein coupled receptor 116</fullName>
    </alternativeName>
</protein>
<dbReference type="EMBL" id="AC169504">
    <property type="status" value="NOT_ANNOTATED_CDS"/>
    <property type="molecule type" value="Genomic_DNA"/>
</dbReference>
<dbReference type="EMBL" id="CT010585">
    <property type="status" value="NOT_ANNOTATED_CDS"/>
    <property type="molecule type" value="Genomic_DNA"/>
</dbReference>
<dbReference type="EMBL" id="CT025700">
    <property type="status" value="NOT_ANNOTATED_CDS"/>
    <property type="molecule type" value="Genomic_DNA"/>
</dbReference>
<dbReference type="EMBL" id="CH466559">
    <property type="protein sequence ID" value="EDL23401.1"/>
    <property type="molecule type" value="Genomic_DNA"/>
</dbReference>
<dbReference type="CCDS" id="CCDS37622.1"/>
<dbReference type="RefSeq" id="NP_001074647.1">
    <property type="nucleotide sequence ID" value="NM_001081178.2"/>
</dbReference>
<dbReference type="RefSeq" id="XP_036016441.1">
    <property type="nucleotide sequence ID" value="XM_036160548.1"/>
</dbReference>
<dbReference type="SMR" id="G5E8Q8"/>
<dbReference type="FunCoup" id="G5E8Q8">
    <property type="interactions" value="51"/>
</dbReference>
<dbReference type="IntAct" id="G5E8Q8">
    <property type="interactions" value="1"/>
</dbReference>
<dbReference type="MINT" id="G5E8Q8"/>
<dbReference type="STRING" id="10090.ENSMUSP00000109229"/>
<dbReference type="MEROPS" id="P02.032"/>
<dbReference type="GlyConnect" id="2110">
    <property type="glycosylation" value="2 N-Linked glycans (1 site)"/>
</dbReference>
<dbReference type="GlyCosmos" id="G5E8Q8">
    <property type="glycosylation" value="8 sites, 2 glycans"/>
</dbReference>
<dbReference type="GlyGen" id="G5E8Q8">
    <property type="glycosylation" value="15 sites, 7 N-linked glycans (10 sites)"/>
</dbReference>
<dbReference type="iPTMnet" id="G5E8Q8"/>
<dbReference type="PhosphoSitePlus" id="G5E8Q8"/>
<dbReference type="jPOST" id="G5E8Q8"/>
<dbReference type="PaxDb" id="10090-ENSMUSP00000109229"/>
<dbReference type="PeptideAtlas" id="G5E8Q8"/>
<dbReference type="ProteomicsDB" id="282034"/>
<dbReference type="Antibodypedia" id="16896">
    <property type="antibodies" value="239 antibodies from 28 providers"/>
</dbReference>
<dbReference type="Ensembl" id="ENSMUST00000113599.2">
    <property type="protein sequence ID" value="ENSMUSP00000109229.2"/>
    <property type="gene ID" value="ENSMUSG00000056492.7"/>
</dbReference>
<dbReference type="Ensembl" id="ENSMUST00000226087.2">
    <property type="protein sequence ID" value="ENSMUSP00000153049.2"/>
    <property type="gene ID" value="ENSMUSG00000056492.7"/>
</dbReference>
<dbReference type="GeneID" id="224792"/>
<dbReference type="KEGG" id="mmu:224792"/>
<dbReference type="UCSC" id="uc008cpa.1">
    <property type="organism name" value="mouse"/>
</dbReference>
<dbReference type="AGR" id="MGI:2182928"/>
<dbReference type="CTD" id="221395"/>
<dbReference type="MGI" id="MGI:2182928">
    <property type="gene designation" value="Adgrf5"/>
</dbReference>
<dbReference type="VEuPathDB" id="HostDB:ENSMUSG00000056492"/>
<dbReference type="eggNOG" id="KOG4193">
    <property type="taxonomic scope" value="Eukaryota"/>
</dbReference>
<dbReference type="GeneTree" id="ENSGT00940000154603"/>
<dbReference type="HOGENOM" id="CLU_002753_3_5_1"/>
<dbReference type="InParanoid" id="G5E8Q8"/>
<dbReference type="OMA" id="RIAYMRH"/>
<dbReference type="OrthoDB" id="10040049at2759"/>
<dbReference type="PhylomeDB" id="G5E8Q8"/>
<dbReference type="TreeFam" id="TF316380"/>
<dbReference type="Reactome" id="R-MMU-5683826">
    <property type="pathway name" value="Surfactant metabolism"/>
</dbReference>
<dbReference type="BioGRID-ORCS" id="224792">
    <property type="hits" value="2 hits in 77 CRISPR screens"/>
</dbReference>
<dbReference type="ChiTaRS" id="Adgrf5">
    <property type="organism name" value="mouse"/>
</dbReference>
<dbReference type="PRO" id="PR:G5E8Q8"/>
<dbReference type="Proteomes" id="UP000000589">
    <property type="component" value="Chromosome 17"/>
</dbReference>
<dbReference type="RNAct" id="G5E8Q8">
    <property type="molecule type" value="protein"/>
</dbReference>
<dbReference type="Bgee" id="ENSMUSG00000056492">
    <property type="expression patterns" value="Expressed in right lung and 218 other cell types or tissues"/>
</dbReference>
<dbReference type="ExpressionAtlas" id="G5E8Q8">
    <property type="expression patterns" value="baseline and differential"/>
</dbReference>
<dbReference type="GO" id="GO:0045177">
    <property type="term" value="C:apical part of cell"/>
    <property type="evidence" value="ECO:0000314"/>
    <property type="project" value="MGI"/>
</dbReference>
<dbReference type="GO" id="GO:0009986">
    <property type="term" value="C:cell surface"/>
    <property type="evidence" value="ECO:0000266"/>
    <property type="project" value="MGI"/>
</dbReference>
<dbReference type="GO" id="GO:0031410">
    <property type="term" value="C:cytoplasmic vesicle"/>
    <property type="evidence" value="ECO:0000266"/>
    <property type="project" value="MGI"/>
</dbReference>
<dbReference type="GO" id="GO:0005886">
    <property type="term" value="C:plasma membrane"/>
    <property type="evidence" value="ECO:0007669"/>
    <property type="project" value="UniProtKB-SubCell"/>
</dbReference>
<dbReference type="GO" id="GO:0004930">
    <property type="term" value="F:G protein-coupled receptor activity"/>
    <property type="evidence" value="ECO:0007669"/>
    <property type="project" value="InterPro"/>
</dbReference>
<dbReference type="GO" id="GO:0007166">
    <property type="term" value="P:cell surface receptor signaling pathway"/>
    <property type="evidence" value="ECO:0007669"/>
    <property type="project" value="InterPro"/>
</dbReference>
<dbReference type="GO" id="GO:0006112">
    <property type="term" value="P:energy reserve metabolic process"/>
    <property type="evidence" value="ECO:0000315"/>
    <property type="project" value="MGI"/>
</dbReference>
<dbReference type="GO" id="GO:0048821">
    <property type="term" value="P:erythrocyte development"/>
    <property type="evidence" value="ECO:0000316"/>
    <property type="project" value="MGI"/>
</dbReference>
<dbReference type="GO" id="GO:0045444">
    <property type="term" value="P:fat cell differentiation"/>
    <property type="evidence" value="ECO:0000315"/>
    <property type="project" value="MGI"/>
</dbReference>
<dbReference type="GO" id="GO:0003094">
    <property type="term" value="P:glomerular filtration"/>
    <property type="evidence" value="ECO:0000316"/>
    <property type="project" value="MGI"/>
</dbReference>
<dbReference type="GO" id="GO:0042593">
    <property type="term" value="P:glucose homeostasis"/>
    <property type="evidence" value="ECO:0000315"/>
    <property type="project" value="MGI"/>
</dbReference>
<dbReference type="GO" id="GO:0042116">
    <property type="term" value="P:macrophage activation"/>
    <property type="evidence" value="ECO:0000315"/>
    <property type="project" value="MGI"/>
</dbReference>
<dbReference type="GO" id="GO:0043031">
    <property type="term" value="P:negative regulation of macrophage activation"/>
    <property type="evidence" value="ECO:0000315"/>
    <property type="project" value="MGI"/>
</dbReference>
<dbReference type="GO" id="GO:0061626">
    <property type="term" value="P:pharyngeal arch artery morphogenesis"/>
    <property type="evidence" value="ECO:0000316"/>
    <property type="project" value="MGI"/>
</dbReference>
<dbReference type="GO" id="GO:0008654">
    <property type="term" value="P:phospholipid biosynthetic process"/>
    <property type="evidence" value="ECO:0000315"/>
    <property type="project" value="MGI"/>
</dbReference>
<dbReference type="GO" id="GO:0071073">
    <property type="term" value="P:positive regulation of phospholipid biosynthetic process"/>
    <property type="evidence" value="ECO:0000315"/>
    <property type="project" value="MGI"/>
</dbReference>
<dbReference type="GO" id="GO:0019216">
    <property type="term" value="P:regulation of lipid metabolic process"/>
    <property type="evidence" value="ECO:0000315"/>
    <property type="project" value="MGI"/>
</dbReference>
<dbReference type="GO" id="GO:0043129">
    <property type="term" value="P:surfactant homeostasis"/>
    <property type="evidence" value="ECO:0000315"/>
    <property type="project" value="UniProtKB"/>
</dbReference>
<dbReference type="FunFam" id="1.20.1070.10:FF:000058">
    <property type="entry name" value="Adhesion G protein-coupled receptor F5"/>
    <property type="match status" value="1"/>
</dbReference>
<dbReference type="FunFam" id="2.60.220.50:FF:000021">
    <property type="entry name" value="Adhesion G protein-coupled receptor F5"/>
    <property type="match status" value="1"/>
</dbReference>
<dbReference type="FunFam" id="2.60.40.10:FF:002239">
    <property type="entry name" value="Adhesion G protein-coupled receptor F5"/>
    <property type="match status" value="1"/>
</dbReference>
<dbReference type="Gene3D" id="2.60.220.50">
    <property type="match status" value="1"/>
</dbReference>
<dbReference type="Gene3D" id="2.60.40.10">
    <property type="entry name" value="Immunoglobulins"/>
    <property type="match status" value="2"/>
</dbReference>
<dbReference type="Gene3D" id="1.20.1070.10">
    <property type="entry name" value="Rhodopsin 7-helix transmembrane proteins"/>
    <property type="match status" value="1"/>
</dbReference>
<dbReference type="InterPro" id="IPR051587">
    <property type="entry name" value="Adhesion_GPCR"/>
</dbReference>
<dbReference type="InterPro" id="IPR057244">
    <property type="entry name" value="GAIN_B"/>
</dbReference>
<dbReference type="InterPro" id="IPR032471">
    <property type="entry name" value="GAIN_dom_N"/>
</dbReference>
<dbReference type="InterPro" id="IPR046338">
    <property type="entry name" value="GAIN_dom_sf"/>
</dbReference>
<dbReference type="InterPro" id="IPR017981">
    <property type="entry name" value="GPCR_2-like_7TM"/>
</dbReference>
<dbReference type="InterPro" id="IPR008078">
    <property type="entry name" value="GPCR_2_Ig-hepta-like_rcpt"/>
</dbReference>
<dbReference type="InterPro" id="IPR000832">
    <property type="entry name" value="GPCR_2_secretin-like"/>
</dbReference>
<dbReference type="InterPro" id="IPR017983">
    <property type="entry name" value="GPCR_2_secretin-like_CS"/>
</dbReference>
<dbReference type="InterPro" id="IPR000203">
    <property type="entry name" value="GPS"/>
</dbReference>
<dbReference type="InterPro" id="IPR007110">
    <property type="entry name" value="Ig-like_dom"/>
</dbReference>
<dbReference type="InterPro" id="IPR036179">
    <property type="entry name" value="Ig-like_dom_sf"/>
</dbReference>
<dbReference type="InterPro" id="IPR013783">
    <property type="entry name" value="Ig-like_fold"/>
</dbReference>
<dbReference type="InterPro" id="IPR003599">
    <property type="entry name" value="Ig_sub"/>
</dbReference>
<dbReference type="InterPro" id="IPR003598">
    <property type="entry name" value="Ig_sub2"/>
</dbReference>
<dbReference type="InterPro" id="IPR013151">
    <property type="entry name" value="Immunoglobulin_dom"/>
</dbReference>
<dbReference type="InterPro" id="IPR000082">
    <property type="entry name" value="SEA_dom"/>
</dbReference>
<dbReference type="InterPro" id="IPR036364">
    <property type="entry name" value="SEA_dom_sf"/>
</dbReference>
<dbReference type="PANTHER" id="PTHR45813:SF4">
    <property type="entry name" value="ADHESION G PROTEIN-COUPLED RECEPTOR F5"/>
    <property type="match status" value="1"/>
</dbReference>
<dbReference type="PANTHER" id="PTHR45813">
    <property type="entry name" value="IG-LIKE DOMAIN-CONTAINING PROTEIN"/>
    <property type="match status" value="1"/>
</dbReference>
<dbReference type="Pfam" id="PF00002">
    <property type="entry name" value="7tm_2"/>
    <property type="match status" value="1"/>
</dbReference>
<dbReference type="Pfam" id="PF25387">
    <property type="entry name" value="ADGRF3_N"/>
    <property type="match status" value="1"/>
</dbReference>
<dbReference type="Pfam" id="PF16489">
    <property type="entry name" value="GAIN"/>
    <property type="match status" value="1"/>
</dbReference>
<dbReference type="Pfam" id="PF01825">
    <property type="entry name" value="GPS"/>
    <property type="match status" value="1"/>
</dbReference>
<dbReference type="Pfam" id="PF00047">
    <property type="entry name" value="ig"/>
    <property type="match status" value="1"/>
</dbReference>
<dbReference type="Pfam" id="PF01390">
    <property type="entry name" value="SEA"/>
    <property type="match status" value="1"/>
</dbReference>
<dbReference type="PRINTS" id="PR00249">
    <property type="entry name" value="GPCRSECRETIN"/>
</dbReference>
<dbReference type="PRINTS" id="PR01695">
    <property type="entry name" value="IGHEPTARCPTR"/>
</dbReference>
<dbReference type="SMART" id="SM00303">
    <property type="entry name" value="GPS"/>
    <property type="match status" value="1"/>
</dbReference>
<dbReference type="SMART" id="SM00409">
    <property type="entry name" value="IG"/>
    <property type="match status" value="2"/>
</dbReference>
<dbReference type="SMART" id="SM00408">
    <property type="entry name" value="IGc2"/>
    <property type="match status" value="2"/>
</dbReference>
<dbReference type="SUPFAM" id="SSF81321">
    <property type="entry name" value="Family A G protein-coupled receptor-like"/>
    <property type="match status" value="1"/>
</dbReference>
<dbReference type="SUPFAM" id="SSF48726">
    <property type="entry name" value="Immunoglobulin"/>
    <property type="match status" value="2"/>
</dbReference>
<dbReference type="SUPFAM" id="SSF82671">
    <property type="entry name" value="SEA domain"/>
    <property type="match status" value="1"/>
</dbReference>
<dbReference type="PROSITE" id="PS00650">
    <property type="entry name" value="G_PROTEIN_RECEP_F2_2"/>
    <property type="match status" value="1"/>
</dbReference>
<dbReference type="PROSITE" id="PS50261">
    <property type="entry name" value="G_PROTEIN_RECEP_F2_4"/>
    <property type="match status" value="1"/>
</dbReference>
<dbReference type="PROSITE" id="PS50221">
    <property type="entry name" value="GAIN_B"/>
    <property type="match status" value="1"/>
</dbReference>
<dbReference type="PROSITE" id="PS50835">
    <property type="entry name" value="IG_LIKE"/>
    <property type="match status" value="3"/>
</dbReference>
<dbReference type="PROSITE" id="PS50024">
    <property type="entry name" value="SEA"/>
    <property type="match status" value="1"/>
</dbReference>
<reference key="1">
    <citation type="journal article" date="2009" name="PLoS Biol.">
        <title>Lineage-specific biology revealed by a finished genome assembly of the mouse.</title>
        <authorList>
            <person name="Church D.M."/>
            <person name="Goodstadt L."/>
            <person name="Hillier L.W."/>
            <person name="Zody M.C."/>
            <person name="Goldstein S."/>
            <person name="She X."/>
            <person name="Bult C.J."/>
            <person name="Agarwala R."/>
            <person name="Cherry J.L."/>
            <person name="DiCuccio M."/>
            <person name="Hlavina W."/>
            <person name="Kapustin Y."/>
            <person name="Meric P."/>
            <person name="Maglott D."/>
            <person name="Birtle Z."/>
            <person name="Marques A.C."/>
            <person name="Graves T."/>
            <person name="Zhou S."/>
            <person name="Teague B."/>
            <person name="Potamousis K."/>
            <person name="Churas C."/>
            <person name="Place M."/>
            <person name="Herschleb J."/>
            <person name="Runnheim R."/>
            <person name="Forrest D."/>
            <person name="Amos-Landgraf J."/>
            <person name="Schwartz D.C."/>
            <person name="Cheng Z."/>
            <person name="Lindblad-Toh K."/>
            <person name="Eichler E.E."/>
            <person name="Ponting C.P."/>
        </authorList>
    </citation>
    <scope>NUCLEOTIDE SEQUENCE [LARGE SCALE GENOMIC DNA]</scope>
    <source>
        <strain>C57BL/6J</strain>
    </source>
</reference>
<reference key="2">
    <citation type="submission" date="2005-07" db="EMBL/GenBank/DDBJ databases">
        <authorList>
            <person name="Mural R.J."/>
            <person name="Adams M.D."/>
            <person name="Myers E.W."/>
            <person name="Smith H.O."/>
            <person name="Venter J.C."/>
        </authorList>
    </citation>
    <scope>NUCLEOTIDE SEQUENCE [LARGE SCALE GENOMIC DNA]</scope>
</reference>
<reference key="3">
    <citation type="journal article" date="2010" name="Cell">
        <title>A tissue-specific atlas of mouse protein phosphorylation and expression.</title>
        <authorList>
            <person name="Huttlin E.L."/>
            <person name="Jedrychowski M.P."/>
            <person name="Elias J.E."/>
            <person name="Goswami T."/>
            <person name="Rad R."/>
            <person name="Beausoleil S.A."/>
            <person name="Villen J."/>
            <person name="Haas W."/>
            <person name="Sowa M.E."/>
            <person name="Gygi S.P."/>
        </authorList>
    </citation>
    <scope>PHOSPHORYLATION [LARGE SCALE ANALYSIS] AT THR-1302 AND SER-1309</scope>
    <scope>IDENTIFICATION BY MASS SPECTROMETRY [LARGE SCALE ANALYSIS]</scope>
    <source>
        <tissue>Brown adipose tissue</tissue>
        <tissue>Heart</tissue>
        <tissue>Kidney</tissue>
        <tissue>Lung</tissue>
    </source>
</reference>
<reference key="4">
    <citation type="journal article" date="2012" name="Dev. Dyn.">
        <title>Characterization and functional study of a cluster of four highly conserved orphan adhesion-GPCR in mouse.</title>
        <authorList>
            <person name="Promel S."/>
            <person name="Waller-Evans H."/>
            <person name="Dixon J."/>
            <person name="Zahn D."/>
            <person name="Colledge W.H."/>
            <person name="Doran J."/>
            <person name="Carlton M.B."/>
            <person name="Grosse J."/>
            <person name="Schoneberg T."/>
            <person name="Russ A.P."/>
            <person name="Langenhan T."/>
        </authorList>
    </citation>
    <scope>TISSUE SPECIFICITY</scope>
</reference>
<reference key="5">
    <citation type="journal article" date="2012" name="FEBS Lett.">
        <title>Adipose tissue deletion of Gpr116 impairs insulin sensitivity through modulation of adipose function.</title>
        <authorList>
            <person name="Nie T."/>
            <person name="Hui X."/>
            <person name="Gao X."/>
            <person name="Li K."/>
            <person name="Lin W."/>
            <person name="Xiang X."/>
            <person name="Ding M."/>
            <person name="Kuang Y."/>
            <person name="Xu A."/>
            <person name="Fei J."/>
            <person name="Wang Z."/>
            <person name="Wu D."/>
        </authorList>
    </citation>
    <scope>FUNCTION</scope>
    <scope>TISSUE SPECIFICITY</scope>
</reference>
<reference key="6">
    <citation type="journal article" date="2013" name="Am. J. Respir. Cell Mol. Biol.">
        <title>Orphan G protein-coupled receptor GPR116 regulates pulmonary surfactant pool size.</title>
        <authorList>
            <person name="Bridges J.P."/>
            <person name="Ludwig M.G."/>
            <person name="Mueller M."/>
            <person name="Kinzel B."/>
            <person name="Sato A."/>
            <person name="Xu Y."/>
            <person name="Whitsett J.A."/>
            <person name="Ikegami M."/>
        </authorList>
    </citation>
    <scope>FUNCTION</scope>
    <scope>TISSUE SPECIFICITY</scope>
    <scope>DEVELOPMENTAL STAGE</scope>
</reference>
<reference key="7">
    <citation type="journal article" date="2013" name="Cell Rep.">
        <title>Essential regulation of lung surfactant homeostasis by the orphan G protein-coupled receptor GPR116.</title>
        <authorList>
            <person name="Yang M.Y."/>
            <person name="Hilton M.B."/>
            <person name="Seaman S."/>
            <person name="Haines D.C."/>
            <person name="Nagashima K."/>
            <person name="Burks C.M."/>
            <person name="Tessarollo L."/>
            <person name="Ivanova P.T."/>
            <person name="Brown H.A."/>
            <person name="Umstead T.M."/>
            <person name="Floros J."/>
            <person name="Chroneos Z.C."/>
            <person name="St Croix B."/>
        </authorList>
    </citation>
    <scope>DISRUPTION PHENOTYPE</scope>
    <scope>FUNCTION</scope>
    <scope>TISSUE SPECIFICITY</scope>
</reference>
<reference key="8">
    <citation type="journal article" date="2013" name="PLoS ONE">
        <title>Lung surfactant levels are regulated by Ig-Hepta/GPR116 by monitoring surfactant protein D.</title>
        <authorList>
            <person name="Fukuzawa T."/>
            <person name="Ishida J."/>
            <person name="Kato A."/>
            <person name="Ichinose T."/>
            <person name="Ariestanti D.M."/>
            <person name="Takahashi T."/>
            <person name="Ito K."/>
            <person name="Abe J."/>
            <person name="Suzuki T."/>
            <person name="Wakana S."/>
            <person name="Fukamizu A."/>
            <person name="Nakamura N."/>
            <person name="Hirose S."/>
        </authorList>
    </citation>
    <scope>FUNCTION</scope>
    <scope>DISRUPTION PHENOTYPE</scope>
    <scope>INTERACTION WITH SFTPD</scope>
    <scope>TISSUE SPECIFICITY</scope>
</reference>
<reference key="9">
    <citation type="journal article" date="2015" name="PLoS ONE">
        <title>Gpr116 Receptor Regulates Distinctive Functions in Pneumocytes and Vascular Endothelium.</title>
        <authorList>
            <person name="Niaudet C."/>
            <person name="Hofmann J.J."/>
            <person name="Maee M.A."/>
            <person name="Jung B."/>
            <person name="Gaengel K."/>
            <person name="Vanlandewijck M."/>
            <person name="Ekvaern E."/>
            <person name="Salvado M.D."/>
            <person name="Mehlem A."/>
            <person name="Al Sayegh S."/>
            <person name="He L."/>
            <person name="Lebouvier T."/>
            <person name="Castro-Freire M."/>
            <person name="Katayama K."/>
            <person name="Hultenby K."/>
            <person name="Moessinger C."/>
            <person name="Tannenberg P."/>
            <person name="Cunha S."/>
            <person name="Pietras K."/>
            <person name="Lavina B."/>
            <person name="Hong J."/>
            <person name="Berg T."/>
            <person name="Betsholtz C."/>
        </authorList>
    </citation>
    <scope>DISRUPTION PHENOTYPE</scope>
</reference>
<reference key="10">
    <citation type="journal article" date="2017" name="J. Biol. Chem.">
        <title>Activation of Adhesion G Protein-coupled Receptors: agonist specificity of Stachel sequence-derived peptides.</title>
        <authorList>
            <person name="Demberg L.M."/>
            <person name="Winkler J."/>
            <person name="Wilde C."/>
            <person name="Simon K.U."/>
            <person name="Schoen J."/>
            <person name="Rothemund S."/>
            <person name="Schoeneberg T."/>
            <person name="Proemel S."/>
            <person name="Liebscher I."/>
        </authorList>
    </citation>
    <scope>TISSUE SPECIFICITY</scope>
    <scope>IDENTIFICATION OF THE TETHERED LIGAND</scope>
</reference>
<reference key="11">
    <citation type="journal article" date="2017" name="JCI Insight">
        <title>Epithelial Gpr116 regulates pulmonary alveolar homeostasis via Gq/11 signaling.</title>
        <authorList>
            <person name="Brown K."/>
            <person name="Filuta A."/>
            <person name="Ludwig M.G."/>
            <person name="Seuwen K."/>
            <person name="Jaros J."/>
            <person name="Vidal S."/>
            <person name="Arora K."/>
            <person name="Naren A.P."/>
            <person name="Kandasamy K."/>
            <person name="Parthasarathi K."/>
            <person name="Offermanns S."/>
            <person name="Mason R.J."/>
            <person name="Miller W.E."/>
            <person name="Whitsett J.A."/>
            <person name="Bridges J.P."/>
        </authorList>
    </citation>
    <scope>FUNCTION</scope>
    <scope>IDENTIFICATION OF THE TETHERED LIGAND</scope>
    <scope>MUTAGENESIS OF 993-THR--PHE-995; 996-SER--LEU-998; 999-MET--PRO-1001; 1002-ASP--PRO-1004 AND 1005-ASP--GLY-1007</scope>
</reference>
<reference key="12">
    <citation type="journal article" date="2020" name="Proc. Natl. Acad. Sci. U.S.A.">
        <title>Adhesion-GPCR Gpr116 (ADGRF5) expression inhibits renal acid secretion.</title>
        <authorList>
            <person name="Zaidman N.A."/>
            <person name="Tomilin V.N."/>
            <person name="Hassanzadeh Khayyat N."/>
            <person name="Damarla M."/>
            <person name="Tidmore J."/>
            <person name="Capen D.E."/>
            <person name="Brown D."/>
            <person name="Pochynyuk O.M."/>
            <person name="Pluznick J.L."/>
        </authorList>
    </citation>
    <scope>FUNCTION</scope>
    <scope>TISSUE SPECIFICITY</scope>
</reference>
<reference key="13">
    <citation type="journal article" date="2021" name="Nat. Commun.">
        <title>Orphan GPR116 mediates the insulin sensitizing effects of the hepatokine FNDC4 in adipose tissue.</title>
        <authorList>
            <person name="Georgiadi A."/>
            <person name="Lopez-Salazar V."/>
            <person name="Merahbi R.E."/>
            <person name="Karikari R.A."/>
            <person name="Ma X."/>
            <person name="Mourao A."/>
            <person name="Klepac K."/>
            <person name="Buehler L."/>
            <person name="Alfaro A.J."/>
            <person name="Kaczmarek I."/>
            <person name="Linford A."/>
            <person name="Bosma M."/>
            <person name="Shilkova O."/>
            <person name="Ritvos O."/>
            <person name="Nakamura N."/>
            <person name="Hirose S."/>
            <person name="Lassi M."/>
            <person name="Teperino R."/>
            <person name="Machado J."/>
            <person name="Scheideler M."/>
            <person name="Dietrich A."/>
            <person name="Geerlof A."/>
            <person name="Feuchtinger A."/>
            <person name="Blutke A."/>
            <person name="Fischer K."/>
            <person name="Mueller T.D."/>
            <person name="Kessler K."/>
            <person name="Schoeneberg T."/>
            <person name="Thor D."/>
            <person name="Hornemann S."/>
            <person name="Kruse M."/>
            <person name="Nawroth P."/>
            <person name="Pivovarova-Ramich O."/>
            <person name="Pfeiffer A.F.H."/>
            <person name="Sattler M."/>
            <person name="Blueher M."/>
            <person name="Herzig S."/>
        </authorList>
    </citation>
    <scope>FUNCTION</scope>
    <scope>TISSUE SPECIFICITY</scope>
</reference>
<reference key="14">
    <citation type="journal article" date="2022" name="Elife">
        <title>Regulation of pulmonary surfactant by the adhesion GPCR GPR116/ADGRF5 requires a tethered agonist-mediated activation mechanism.</title>
        <authorList>
            <person name="Bridges J.P."/>
            <person name="Safina C."/>
            <person name="Pirard B."/>
            <person name="Brown K."/>
            <person name="Filuta A."/>
            <person name="Panchanathan R."/>
            <person name="Bouhelal R."/>
            <person name="Reymann N."/>
            <person name="Patel S."/>
            <person name="Seuwen K."/>
            <person name="Miller W.E."/>
            <person name="Ludwig M.G."/>
        </authorList>
    </citation>
    <scope>SUBCELLULAR LOCATION</scope>
    <scope>MUTAGENESIS OF HIS-991; THR-993; SER-994; PHE-995; SER-996; ILE-997; LEU-998; MET-999; SER-1000; PRO-1001; ASP-1002; SER-1003; PRO-1004; TYR-1158; ARG-1160; TRP-1165; LEU-1166 AND THR-1240</scope>
</reference>
<reference key="15">
    <citation type="journal article" date="2024" name="Commun. Biol.">
        <title>The adhesion GPCR GPR116/ADGRF5 has a dual function in pancreatic islets regulating somatostatin release and islet development.</title>
        <authorList>
            <person name="Roethe J."/>
            <person name="Kraft R."/>
            <person name="Ricken A."/>
            <person name="Kaczmarek I."/>
            <person name="Matz-Soja M."/>
            <person name="Winter K."/>
            <person name="Dietzsch A.N."/>
            <person name="Buchold J."/>
            <person name="Ludwig M.G."/>
            <person name="Liebscher I."/>
            <person name="Schoeneberg T."/>
            <person name="Thor D."/>
        </authorList>
    </citation>
    <scope>TISSUE SPECIFICITY</scope>
</reference>
<name>AGRF5_MOUSE</name>
<accession>G5E8Q8</accession>
<gene>
    <name type="primary">Adgrf5</name>
    <name evidence="19 21" type="synonym">Gpr116</name>
</gene>
<organism>
    <name type="scientific">Mus musculus</name>
    <name type="common">Mouse</name>
    <dbReference type="NCBI Taxonomy" id="10090"/>
    <lineage>
        <taxon>Eukaryota</taxon>
        <taxon>Metazoa</taxon>
        <taxon>Chordata</taxon>
        <taxon>Craniata</taxon>
        <taxon>Vertebrata</taxon>
        <taxon>Euteleostomi</taxon>
        <taxon>Mammalia</taxon>
        <taxon>Eutheria</taxon>
        <taxon>Euarchontoglires</taxon>
        <taxon>Glires</taxon>
        <taxon>Rodentia</taxon>
        <taxon>Myomorpha</taxon>
        <taxon>Muroidea</taxon>
        <taxon>Muridae</taxon>
        <taxon>Murinae</taxon>
        <taxon>Mus</taxon>
        <taxon>Mus</taxon>
    </lineage>
</organism>